<comment type="catalytic activity">
    <reaction evidence="1">
        <text>5-amino-1-(5-phospho-D-ribosyl)imidazole-4-carboxylate + L-aspartate + ATP = (2S)-2-[5-amino-1-(5-phospho-beta-D-ribosyl)imidazole-4-carboxamido]succinate + ADP + phosphate + 2 H(+)</text>
        <dbReference type="Rhea" id="RHEA:22628"/>
        <dbReference type="ChEBI" id="CHEBI:15378"/>
        <dbReference type="ChEBI" id="CHEBI:29991"/>
        <dbReference type="ChEBI" id="CHEBI:30616"/>
        <dbReference type="ChEBI" id="CHEBI:43474"/>
        <dbReference type="ChEBI" id="CHEBI:58443"/>
        <dbReference type="ChEBI" id="CHEBI:77657"/>
        <dbReference type="ChEBI" id="CHEBI:456216"/>
        <dbReference type="EC" id="6.3.2.6"/>
    </reaction>
</comment>
<comment type="pathway">
    <text evidence="1">Purine metabolism; IMP biosynthesis via de novo pathway; 5-amino-1-(5-phospho-D-ribosyl)imidazole-4-carboxamide from 5-amino-1-(5-phospho-D-ribosyl)imidazole-4-carboxylate: step 1/2.</text>
</comment>
<comment type="similarity">
    <text evidence="1">Belongs to the SAICAR synthetase family.</text>
</comment>
<protein>
    <recommendedName>
        <fullName evidence="1">Phosphoribosylaminoimidazole-succinocarboxamide synthase</fullName>
        <ecNumber evidence="1">6.3.2.6</ecNumber>
    </recommendedName>
    <alternativeName>
        <fullName evidence="1">SAICAR synthetase</fullName>
    </alternativeName>
</protein>
<organism>
    <name type="scientific">Azobacteroides pseudotrichonymphae genomovar. CFP2</name>
    <dbReference type="NCBI Taxonomy" id="511995"/>
    <lineage>
        <taxon>Bacteria</taxon>
        <taxon>Pseudomonadati</taxon>
        <taxon>Bacteroidota</taxon>
        <taxon>Bacteroidia</taxon>
        <taxon>Bacteroidales</taxon>
        <taxon>Candidatus Azobacteroides</taxon>
    </lineage>
</organism>
<accession>B6YRK7</accession>
<sequence length="323" mass="37584">MNYLTTTNYCFPCQTHLYHGKVRDVYTVGSDMLVIIATDRISAFDVVLSRGIPYKGQVLNQIAAKFLDSTSDILPNWKLAEPDPMVTIGLLCEPFKVEMVIRGYLTGSAWRKYKEGERTLCAVTLPEGMKENEKFPNPIITPTTKAYKGHDENISKEEIIERFLVSKEDYEQLEYYTRALFQRGTEIASSKGLILVDTKYEFGKKDGRIYLIDEIHTPDSSRYFYSEDYQERFEKGEGQKQLSKEFVRQWLMKQNFQGKEGQIVPEMTPEYCQIVSERYIELYETIVGEQFIRASTSNISARIKKNIETYLMNKEQVKWNNMV</sequence>
<evidence type="ECO:0000255" key="1">
    <source>
        <dbReference type="HAMAP-Rule" id="MF_00137"/>
    </source>
</evidence>
<dbReference type="EC" id="6.3.2.6" evidence="1"/>
<dbReference type="EMBL" id="AP010656">
    <property type="protein sequence ID" value="BAG83829.1"/>
    <property type="molecule type" value="Genomic_DNA"/>
</dbReference>
<dbReference type="RefSeq" id="WP_012573589.1">
    <property type="nucleotide sequence ID" value="NC_011565.1"/>
</dbReference>
<dbReference type="SMR" id="B6YRK7"/>
<dbReference type="STRING" id="511995.CFPG_566"/>
<dbReference type="KEGG" id="aps:CFPG_566"/>
<dbReference type="eggNOG" id="COG0152">
    <property type="taxonomic scope" value="Bacteria"/>
</dbReference>
<dbReference type="HOGENOM" id="CLU_045637_0_1_10"/>
<dbReference type="OrthoDB" id="9801549at2"/>
<dbReference type="UniPathway" id="UPA00074">
    <property type="reaction ID" value="UER00131"/>
</dbReference>
<dbReference type="Proteomes" id="UP000000723">
    <property type="component" value="Chromosome"/>
</dbReference>
<dbReference type="GO" id="GO:0005737">
    <property type="term" value="C:cytoplasm"/>
    <property type="evidence" value="ECO:0007669"/>
    <property type="project" value="TreeGrafter"/>
</dbReference>
<dbReference type="GO" id="GO:0005524">
    <property type="term" value="F:ATP binding"/>
    <property type="evidence" value="ECO:0007669"/>
    <property type="project" value="UniProtKB-KW"/>
</dbReference>
<dbReference type="GO" id="GO:0004639">
    <property type="term" value="F:phosphoribosylaminoimidazolesuccinocarboxamide synthase activity"/>
    <property type="evidence" value="ECO:0007669"/>
    <property type="project" value="UniProtKB-UniRule"/>
</dbReference>
<dbReference type="GO" id="GO:0006189">
    <property type="term" value="P:'de novo' IMP biosynthetic process"/>
    <property type="evidence" value="ECO:0007669"/>
    <property type="project" value="UniProtKB-UniRule"/>
</dbReference>
<dbReference type="CDD" id="cd01414">
    <property type="entry name" value="SAICAR_synt_Sc"/>
    <property type="match status" value="1"/>
</dbReference>
<dbReference type="FunFam" id="3.30.200.20:FF:000199">
    <property type="entry name" value="Phosphoribosylaminoimidazole-succinocarboxamide synthase"/>
    <property type="match status" value="1"/>
</dbReference>
<dbReference type="FunFam" id="3.30.470.20:FF:000015">
    <property type="entry name" value="Phosphoribosylaminoimidazole-succinocarboxamide synthase"/>
    <property type="match status" value="1"/>
</dbReference>
<dbReference type="Gene3D" id="3.30.470.20">
    <property type="entry name" value="ATP-grasp fold, B domain"/>
    <property type="match status" value="1"/>
</dbReference>
<dbReference type="Gene3D" id="3.30.200.20">
    <property type="entry name" value="Phosphorylase Kinase, domain 1"/>
    <property type="match status" value="1"/>
</dbReference>
<dbReference type="HAMAP" id="MF_00137">
    <property type="entry name" value="SAICAR_synth"/>
    <property type="match status" value="1"/>
</dbReference>
<dbReference type="InterPro" id="IPR028923">
    <property type="entry name" value="SAICAR_synt/ADE2_N"/>
</dbReference>
<dbReference type="InterPro" id="IPR018236">
    <property type="entry name" value="SAICAR_synthetase_CS"/>
</dbReference>
<dbReference type="NCBIfam" id="NF009251">
    <property type="entry name" value="PRK12607.1"/>
    <property type="match status" value="1"/>
</dbReference>
<dbReference type="NCBIfam" id="NF010568">
    <property type="entry name" value="PRK13961.1"/>
    <property type="match status" value="1"/>
</dbReference>
<dbReference type="PANTHER" id="PTHR43700">
    <property type="entry name" value="PHOSPHORIBOSYLAMINOIMIDAZOLE-SUCCINOCARBOXAMIDE SYNTHASE"/>
    <property type="match status" value="1"/>
</dbReference>
<dbReference type="PANTHER" id="PTHR43700:SF1">
    <property type="entry name" value="PHOSPHORIBOSYLAMINOIMIDAZOLE-SUCCINOCARBOXAMIDE SYNTHASE"/>
    <property type="match status" value="1"/>
</dbReference>
<dbReference type="Pfam" id="PF01259">
    <property type="entry name" value="SAICAR_synt"/>
    <property type="match status" value="1"/>
</dbReference>
<dbReference type="SUPFAM" id="SSF56104">
    <property type="entry name" value="SAICAR synthase-like"/>
    <property type="match status" value="1"/>
</dbReference>
<dbReference type="PROSITE" id="PS01057">
    <property type="entry name" value="SAICAR_SYNTHETASE_1"/>
    <property type="match status" value="1"/>
</dbReference>
<dbReference type="PROSITE" id="PS01058">
    <property type="entry name" value="SAICAR_SYNTHETASE_2"/>
    <property type="match status" value="1"/>
</dbReference>
<keyword id="KW-0067">ATP-binding</keyword>
<keyword id="KW-0436">Ligase</keyword>
<keyword id="KW-0547">Nucleotide-binding</keyword>
<keyword id="KW-0658">Purine biosynthesis</keyword>
<keyword id="KW-1185">Reference proteome</keyword>
<gene>
    <name evidence="1" type="primary">purC</name>
    <name type="ordered locus">CFPG_566</name>
</gene>
<feature type="chain" id="PRO_1000095963" description="Phosphoribosylaminoimidazole-succinocarboxamide synthase">
    <location>
        <begin position="1"/>
        <end position="323"/>
    </location>
</feature>
<reference key="1">
    <citation type="journal article" date="2008" name="Science">
        <title>Genome of an endosymbiont coupling N2 fixation to cellulolysis within RT protist cells in termite gut.</title>
        <authorList>
            <person name="Hongoh Y."/>
            <person name="Sharma V.K."/>
            <person name="Prakash T."/>
            <person name="Noda S."/>
            <person name="Toh H."/>
            <person name="Taylor T.D."/>
            <person name="Kudo T."/>
            <person name="Sakaki Y."/>
            <person name="Toyoda A."/>
            <person name="Hattori M."/>
            <person name="Ohkuma M."/>
        </authorList>
    </citation>
    <scope>NUCLEOTIDE SEQUENCE [LARGE SCALE GENOMIC DNA]</scope>
</reference>
<proteinExistence type="inferred from homology"/>
<name>PUR7_AZOPC</name>